<sequence>MKRVDTIRPRSRAVRLHVRGLGLPDETAIQLWIVDGRISTEPVAGADTVFDGGWILPGLVDAHCHVGLGKHGNVELDEAIAQAETERDVGALLLRDCGSPTDTRGLDDHEDLPRIIRAGRHLARPKRYIAGFAVELEDESQLPAAVAEQARRGDGWVKLVGDWIDRQIGDLAPLWSDDVLKAAIDTAHAQGARVTAHVFSEDALPGLINAGIDCIEHGTGLTDDTIALMLEHGTALVPTLINLENFPGIADAAGRYPTYAAHMRDLYARGYGRVAAAREAGVPVYAGTDAGSTIEHGRIADEVAALQRIGMTAHEALGAACWDARRWLGRPGLDDRASADLLCYAQDPRQGPGVLQHPDLVILRGRTFGP</sequence>
<organism>
    <name type="scientific">Mycobacterium tuberculosis (strain ATCC 25618 / H37Rv)</name>
    <dbReference type="NCBI Taxonomy" id="83332"/>
    <lineage>
        <taxon>Bacteria</taxon>
        <taxon>Bacillati</taxon>
        <taxon>Actinomycetota</taxon>
        <taxon>Actinomycetes</taxon>
        <taxon>Mycobacteriales</taxon>
        <taxon>Mycobacteriaceae</taxon>
        <taxon>Mycobacterium</taxon>
        <taxon>Mycobacterium tuberculosis complex</taxon>
    </lineage>
</organism>
<accession>P9WL23</accession>
<accession>L0TDX9</accession>
<accession>P68917</accession>
<accession>Q10965</accession>
<keyword id="KW-1185">Reference proteome</keyword>
<dbReference type="EMBL" id="AL123456">
    <property type="protein sequence ID" value="CCP45717.1"/>
    <property type="molecule type" value="Genomic_DNA"/>
</dbReference>
<dbReference type="PIR" id="C70747">
    <property type="entry name" value="C70747"/>
</dbReference>
<dbReference type="RefSeq" id="NP_217431.1">
    <property type="nucleotide sequence ID" value="NC_000962.3"/>
</dbReference>
<dbReference type="RefSeq" id="WP_003899537.1">
    <property type="nucleotide sequence ID" value="NZ_NVQJ01000006.1"/>
</dbReference>
<dbReference type="SMR" id="P9WL23"/>
<dbReference type="STRING" id="83332.Rv2915c"/>
<dbReference type="PaxDb" id="83332-Rv2915c"/>
<dbReference type="DNASU" id="888083"/>
<dbReference type="GeneID" id="888083"/>
<dbReference type="KEGG" id="mtu:Rv2915c"/>
<dbReference type="KEGG" id="mtv:RVBD_2915c"/>
<dbReference type="PATRIC" id="fig|83332.111.peg.3244"/>
<dbReference type="TubercuList" id="Rv2915c"/>
<dbReference type="eggNOG" id="COG1228">
    <property type="taxonomic scope" value="Bacteria"/>
</dbReference>
<dbReference type="InParanoid" id="P9WL23"/>
<dbReference type="OrthoDB" id="3451205at2"/>
<dbReference type="PhylomeDB" id="P9WL23"/>
<dbReference type="Proteomes" id="UP000001584">
    <property type="component" value="Chromosome"/>
</dbReference>
<dbReference type="GO" id="GO:0016810">
    <property type="term" value="F:hydrolase activity, acting on carbon-nitrogen (but not peptide) bonds"/>
    <property type="evidence" value="ECO:0007669"/>
    <property type="project" value="InterPro"/>
</dbReference>
<dbReference type="CDD" id="cd01299">
    <property type="entry name" value="Met_dep_hydrolase_A"/>
    <property type="match status" value="1"/>
</dbReference>
<dbReference type="FunFam" id="3.20.20.140:FF:000054">
    <property type="entry name" value="Imidazolonepropionase-like amidohydrolase"/>
    <property type="match status" value="1"/>
</dbReference>
<dbReference type="Gene3D" id="3.20.20.140">
    <property type="entry name" value="Metal-dependent hydrolases"/>
    <property type="match status" value="1"/>
</dbReference>
<dbReference type="Gene3D" id="2.30.40.10">
    <property type="entry name" value="Urease, subunit C, domain 1"/>
    <property type="match status" value="1"/>
</dbReference>
<dbReference type="InterPro" id="IPR006680">
    <property type="entry name" value="Amidohydro-rel"/>
</dbReference>
<dbReference type="InterPro" id="IPR011059">
    <property type="entry name" value="Metal-dep_hydrolase_composite"/>
</dbReference>
<dbReference type="InterPro" id="IPR032466">
    <property type="entry name" value="Metal_Hydrolase"/>
</dbReference>
<dbReference type="InterPro" id="IPR051781">
    <property type="entry name" value="Metallo-dep_Hydrolase"/>
</dbReference>
<dbReference type="PANTHER" id="PTHR43135">
    <property type="entry name" value="ALPHA-D-RIBOSE 1-METHYLPHOSPHONATE 5-TRIPHOSPHATE DIPHOSPHATASE"/>
    <property type="match status" value="1"/>
</dbReference>
<dbReference type="PANTHER" id="PTHR43135:SF4">
    <property type="entry name" value="AMIDOHYDROLASE-RELATED DOMAIN-CONTAINING PROTEIN"/>
    <property type="match status" value="1"/>
</dbReference>
<dbReference type="Pfam" id="PF01979">
    <property type="entry name" value="Amidohydro_1"/>
    <property type="match status" value="1"/>
</dbReference>
<dbReference type="SUPFAM" id="SSF51556">
    <property type="entry name" value="Metallo-dependent hydrolases"/>
    <property type="match status" value="1"/>
</dbReference>
<protein>
    <recommendedName>
        <fullName>Uncharacterized protein Rv2915c</fullName>
    </recommendedName>
</protein>
<name>Y2915_MYCTU</name>
<gene>
    <name type="ordered locus">Rv2915c</name>
    <name type="ORF">MTCY338.03c</name>
</gene>
<comment type="similarity">
    <text evidence="1">Belongs to the metallo-dependent hydrolases superfamily.</text>
</comment>
<reference key="1">
    <citation type="journal article" date="1998" name="Nature">
        <title>Deciphering the biology of Mycobacterium tuberculosis from the complete genome sequence.</title>
        <authorList>
            <person name="Cole S.T."/>
            <person name="Brosch R."/>
            <person name="Parkhill J."/>
            <person name="Garnier T."/>
            <person name="Churcher C.M."/>
            <person name="Harris D.E."/>
            <person name="Gordon S.V."/>
            <person name="Eiglmeier K."/>
            <person name="Gas S."/>
            <person name="Barry C.E. III"/>
            <person name="Tekaia F."/>
            <person name="Badcock K."/>
            <person name="Basham D."/>
            <person name="Brown D."/>
            <person name="Chillingworth T."/>
            <person name="Connor R."/>
            <person name="Davies R.M."/>
            <person name="Devlin K."/>
            <person name="Feltwell T."/>
            <person name="Gentles S."/>
            <person name="Hamlin N."/>
            <person name="Holroyd S."/>
            <person name="Hornsby T."/>
            <person name="Jagels K."/>
            <person name="Krogh A."/>
            <person name="McLean J."/>
            <person name="Moule S."/>
            <person name="Murphy L.D."/>
            <person name="Oliver S."/>
            <person name="Osborne J."/>
            <person name="Quail M.A."/>
            <person name="Rajandream M.A."/>
            <person name="Rogers J."/>
            <person name="Rutter S."/>
            <person name="Seeger K."/>
            <person name="Skelton S."/>
            <person name="Squares S."/>
            <person name="Squares R."/>
            <person name="Sulston J.E."/>
            <person name="Taylor K."/>
            <person name="Whitehead S."/>
            <person name="Barrell B.G."/>
        </authorList>
    </citation>
    <scope>NUCLEOTIDE SEQUENCE [LARGE SCALE GENOMIC DNA]</scope>
    <source>
        <strain>ATCC 25618 / H37Rv</strain>
    </source>
</reference>
<reference key="2">
    <citation type="journal article" date="2011" name="Mol. Cell. Proteomics">
        <title>Proteogenomic analysis of Mycobacterium tuberculosis by high resolution mass spectrometry.</title>
        <authorList>
            <person name="Kelkar D.S."/>
            <person name="Kumar D."/>
            <person name="Kumar P."/>
            <person name="Balakrishnan L."/>
            <person name="Muthusamy B."/>
            <person name="Yadav A.K."/>
            <person name="Shrivastava P."/>
            <person name="Marimuthu A."/>
            <person name="Anand S."/>
            <person name="Sundaram H."/>
            <person name="Kingsbury R."/>
            <person name="Harsha H.C."/>
            <person name="Nair B."/>
            <person name="Prasad T.S."/>
            <person name="Chauhan D.S."/>
            <person name="Katoch K."/>
            <person name="Katoch V.M."/>
            <person name="Kumar P."/>
            <person name="Chaerkady R."/>
            <person name="Ramachandran S."/>
            <person name="Dash D."/>
            <person name="Pandey A."/>
        </authorList>
    </citation>
    <scope>IDENTIFICATION BY MASS SPECTROMETRY [LARGE SCALE ANALYSIS]</scope>
    <source>
        <strain>ATCC 25618 / H37Rv</strain>
    </source>
</reference>
<feature type="chain" id="PRO_0000104101" description="Uncharacterized protein Rv2915c">
    <location>
        <begin position="1"/>
        <end position="370"/>
    </location>
</feature>
<evidence type="ECO:0000305" key="1"/>
<proteinExistence type="evidence at protein level"/>